<comment type="function">
    <text evidence="3 8 9 10 11 14">Has acyl-CoA thioesterase activity towards medium and long-chain (C14 to C18) fatty acyl-CoA substrates, and probably plays a role in mitochondrial fatty acid metabolism. Plays a role in the apoptotic process, possibly via its regulation of AKT1 activity. According to PubMed:11598301, inhibits AKT1 phosphorylation and activity. According to PubMed:17615157, enhances AKT1 activity by favoring its phosphorylation and translocation to plasma membrane.</text>
</comment>
<comment type="catalytic activity">
    <reaction evidence="11 14">
        <text>hexadecanoyl-CoA + H2O = hexadecanoate + CoA + H(+)</text>
        <dbReference type="Rhea" id="RHEA:16645"/>
        <dbReference type="ChEBI" id="CHEBI:7896"/>
        <dbReference type="ChEBI" id="CHEBI:15377"/>
        <dbReference type="ChEBI" id="CHEBI:15378"/>
        <dbReference type="ChEBI" id="CHEBI:57287"/>
        <dbReference type="ChEBI" id="CHEBI:57379"/>
        <dbReference type="EC" id="3.1.2.2"/>
    </reaction>
    <physiologicalReaction direction="left-to-right" evidence="17">
        <dbReference type="Rhea" id="RHEA:16646"/>
    </physiologicalReaction>
</comment>
<comment type="catalytic activity">
    <reaction evidence="11">
        <text>octanoyl-CoA + H2O = octanoate + CoA + H(+)</text>
        <dbReference type="Rhea" id="RHEA:30143"/>
        <dbReference type="ChEBI" id="CHEBI:15377"/>
        <dbReference type="ChEBI" id="CHEBI:15378"/>
        <dbReference type="ChEBI" id="CHEBI:25646"/>
        <dbReference type="ChEBI" id="CHEBI:57287"/>
        <dbReference type="ChEBI" id="CHEBI:57386"/>
    </reaction>
    <physiologicalReaction direction="left-to-right" evidence="17">
        <dbReference type="Rhea" id="RHEA:30144"/>
    </physiologicalReaction>
</comment>
<comment type="catalytic activity">
    <reaction evidence="11">
        <text>decanoyl-CoA + H2O = decanoate + CoA + H(+)</text>
        <dbReference type="Rhea" id="RHEA:40059"/>
        <dbReference type="ChEBI" id="CHEBI:15377"/>
        <dbReference type="ChEBI" id="CHEBI:15378"/>
        <dbReference type="ChEBI" id="CHEBI:27689"/>
        <dbReference type="ChEBI" id="CHEBI:57287"/>
        <dbReference type="ChEBI" id="CHEBI:61430"/>
    </reaction>
    <physiologicalReaction direction="left-to-right" evidence="17">
        <dbReference type="Rhea" id="RHEA:40060"/>
    </physiologicalReaction>
</comment>
<comment type="catalytic activity">
    <reaction evidence="11">
        <text>dodecanoyl-CoA + H2O = dodecanoate + CoA + H(+)</text>
        <dbReference type="Rhea" id="RHEA:30135"/>
        <dbReference type="ChEBI" id="CHEBI:15377"/>
        <dbReference type="ChEBI" id="CHEBI:15378"/>
        <dbReference type="ChEBI" id="CHEBI:18262"/>
        <dbReference type="ChEBI" id="CHEBI:57287"/>
        <dbReference type="ChEBI" id="CHEBI:57375"/>
    </reaction>
    <physiologicalReaction direction="left-to-right" evidence="17">
        <dbReference type="Rhea" id="RHEA:30136"/>
    </physiologicalReaction>
</comment>
<comment type="catalytic activity">
    <reaction evidence="11">
        <text>tetradecanoyl-CoA + H2O = tetradecanoate + CoA + H(+)</text>
        <dbReference type="Rhea" id="RHEA:40119"/>
        <dbReference type="ChEBI" id="CHEBI:15377"/>
        <dbReference type="ChEBI" id="CHEBI:15378"/>
        <dbReference type="ChEBI" id="CHEBI:30807"/>
        <dbReference type="ChEBI" id="CHEBI:57287"/>
        <dbReference type="ChEBI" id="CHEBI:57385"/>
    </reaction>
    <physiologicalReaction direction="left-to-right" evidence="17">
        <dbReference type="Rhea" id="RHEA:40120"/>
    </physiologicalReaction>
</comment>
<comment type="catalytic activity">
    <reaction evidence="11">
        <text>(9Z)-octadecenoyl-CoA + H2O = (9Z)-octadecenoate + CoA + H(+)</text>
        <dbReference type="Rhea" id="RHEA:40139"/>
        <dbReference type="ChEBI" id="CHEBI:15377"/>
        <dbReference type="ChEBI" id="CHEBI:15378"/>
        <dbReference type="ChEBI" id="CHEBI:30823"/>
        <dbReference type="ChEBI" id="CHEBI:57287"/>
        <dbReference type="ChEBI" id="CHEBI:57387"/>
    </reaction>
    <physiologicalReaction direction="left-to-right" evidence="17">
        <dbReference type="Rhea" id="RHEA:40140"/>
    </physiologicalReaction>
</comment>
<comment type="catalytic activity">
    <reaction evidence="11">
        <text>(5Z,8Z,11Z,14Z)-eicosatetraenoyl-CoA + H2O = (5Z,8Z,11Z,14Z)-eicosatetraenoate + CoA + H(+)</text>
        <dbReference type="Rhea" id="RHEA:40151"/>
        <dbReference type="ChEBI" id="CHEBI:15377"/>
        <dbReference type="ChEBI" id="CHEBI:15378"/>
        <dbReference type="ChEBI" id="CHEBI:32395"/>
        <dbReference type="ChEBI" id="CHEBI:57287"/>
        <dbReference type="ChEBI" id="CHEBI:57368"/>
    </reaction>
    <physiologicalReaction direction="left-to-right" evidence="17">
        <dbReference type="Rhea" id="RHEA:40152"/>
    </physiologicalReaction>
</comment>
<comment type="biophysicochemical properties">
    <kinetics>
        <KM evidence="11 14">2.4 uM for myristoyl-CoA</KM>
        <KM evidence="11 14">2.6 uM for palmitoyl-CoA</KM>
        <KM evidence="11 14">5.2 uM for oleoyl-CoA</KM>
    </kinetics>
</comment>
<comment type="subunit">
    <text evidence="3 13 14">Homodimer and homotetramer. Interacts with AKT1 in the cytosol.</text>
</comment>
<comment type="interaction">
    <interactant intactId="EBI-7684443">
        <id>Q5T1C6</id>
    </interactant>
    <interactant intactId="EBI-296087">
        <id>P31749</id>
        <label>AKT1</label>
    </interactant>
    <organismsDiffer>false</organismsDiffer>
    <experiments>4</experiments>
</comment>
<comment type="interaction">
    <interactant intactId="EBI-7684443">
        <id>Q5T1C6</id>
    </interactant>
    <interactant intactId="EBI-348399">
        <id>P22607</id>
        <label>FGFR3</label>
    </interactant>
    <organismsDiffer>false</organismsDiffer>
    <experiments>3</experiments>
</comment>
<comment type="interaction">
    <interactant intactId="EBI-7684443">
        <id>Q5T1C6</id>
    </interactant>
    <interactant intactId="EBI-350145">
        <id>P01112</id>
        <label>HRAS</label>
    </interactant>
    <organismsDiffer>false</organismsDiffer>
    <experiments>3</experiments>
</comment>
<comment type="interaction">
    <interactant intactId="EBI-7684443">
        <id>Q5T1C6</id>
    </interactant>
    <interactant intactId="EBI-716404">
        <id>P16284</id>
        <label>PECAM1</label>
    </interactant>
    <organismsDiffer>false</organismsDiffer>
    <experiments>3</experiments>
</comment>
<comment type="interaction">
    <interactant intactId="EBI-7684443">
        <id>Q5T1C6</id>
    </interactant>
    <interactant intactId="EBI-5235340">
        <id>Q7Z699</id>
        <label>SPRED1</label>
    </interactant>
    <organismsDiffer>false</organismsDiffer>
    <experiments>3</experiments>
</comment>
<comment type="interaction">
    <interactant intactId="EBI-7684443">
        <id>Q5T1C6</id>
    </interactant>
    <interactant intactId="EBI-353844">
        <id>P08670</id>
        <label>VIM</label>
    </interactant>
    <organismsDiffer>false</organismsDiffer>
    <experiments>3</experiments>
</comment>
<comment type="interaction">
    <interactant intactId="EBI-7684443">
        <id>Q5T1C6</id>
    </interactant>
    <interactant intactId="EBI-25900580">
        <id>Q9Y649</id>
    </interactant>
    <organismsDiffer>false</organismsDiffer>
    <experiments>3</experiments>
</comment>
<comment type="subcellular location">
    <subcellularLocation>
        <location evidence="3">Cell membrane</location>
    </subcellularLocation>
    <subcellularLocation>
        <location evidence="3">Cell projection</location>
        <location evidence="3">Ruffle membrane</location>
    </subcellularLocation>
    <subcellularLocation>
        <location evidence="12">Cytoplasm</location>
    </subcellularLocation>
    <subcellularLocation>
        <location evidence="9 10 12">Mitochondrion</location>
    </subcellularLocation>
    <subcellularLocation>
        <location>Mitochondrion inner membrane</location>
        <topology evidence="9">Peripheral membrane protein</topology>
    </subcellularLocation>
    <subcellularLocation>
        <location evidence="9 12">Mitochondrion intermembrane space</location>
    </subcellularLocation>
    <text evidence="9">Released from the mitochondria into the cytosol in response to apoptotic stimuli.</text>
</comment>
<comment type="tissue specificity">
    <text evidence="3 5">Expressed predominantly in skeletal muscle, testis, uterus, brain and kidney. Down-regulated in glioblastoma or glioma compared to non-neoplastic brain due to promoter hypermethylation.</text>
</comment>
<comment type="PTM">
    <text evidence="3 12">Phosphorylated.</text>
</comment>
<comment type="similarity">
    <text evidence="16">Belongs to the THEM4/THEM5 thioesterase family.</text>
</comment>
<accession>Q5T1C6</accession>
<accession>B2RBX2</accession>
<accession>Q96KR2</accession>
<proteinExistence type="evidence at protein level"/>
<keyword id="KW-0002">3D-structure</keyword>
<keyword id="KW-0007">Acetylation</keyword>
<keyword id="KW-0053">Apoptosis</keyword>
<keyword id="KW-1003">Cell membrane</keyword>
<keyword id="KW-0966">Cell projection</keyword>
<keyword id="KW-0963">Cytoplasm</keyword>
<keyword id="KW-0276">Fatty acid metabolism</keyword>
<keyword id="KW-0378">Hydrolase</keyword>
<keyword id="KW-0443">Lipid metabolism</keyword>
<keyword id="KW-0472">Membrane</keyword>
<keyword id="KW-0496">Mitochondrion</keyword>
<keyword id="KW-0999">Mitochondrion inner membrane</keyword>
<keyword id="KW-0597">Phosphoprotein</keyword>
<keyword id="KW-1267">Proteomics identification</keyword>
<keyword id="KW-1185">Reference proteome</keyword>
<keyword id="KW-0809">Transit peptide</keyword>
<reference key="1">
    <citation type="journal article" date="2001" name="Science">
        <title>Carboxyl-terminal modulator protein (CTMP), a negative regulator of PKB/Akt and v-Akt at the plasma membrane.</title>
        <authorList>
            <person name="Maira S.-M."/>
            <person name="Galetic I."/>
            <person name="Brazil D.P."/>
            <person name="Kaech S."/>
            <person name="Ingley E."/>
            <person name="Thelen M."/>
            <person name="Hemmings B.A."/>
        </authorList>
    </citation>
    <scope>NUCLEOTIDE SEQUENCE [MRNA]</scope>
    <scope>FUNCTION</scope>
    <scope>INTERACTION WITH AKT1</scope>
    <scope>TISSUE SPECIFICITY</scope>
    <scope>SUBCELLULAR LOCATION</scope>
    <scope>PHOSPHORYLATION</scope>
    <scope>VARIANT ARG-17</scope>
</reference>
<reference key="2">
    <citation type="journal article" date="2004" name="Nat. Genet.">
        <title>Complete sequencing and characterization of 21,243 full-length human cDNAs.</title>
        <authorList>
            <person name="Ota T."/>
            <person name="Suzuki Y."/>
            <person name="Nishikawa T."/>
            <person name="Otsuki T."/>
            <person name="Sugiyama T."/>
            <person name="Irie R."/>
            <person name="Wakamatsu A."/>
            <person name="Hayashi K."/>
            <person name="Sato H."/>
            <person name="Nagai K."/>
            <person name="Kimura K."/>
            <person name="Makita H."/>
            <person name="Sekine M."/>
            <person name="Obayashi M."/>
            <person name="Nishi T."/>
            <person name="Shibahara T."/>
            <person name="Tanaka T."/>
            <person name="Ishii S."/>
            <person name="Yamamoto J."/>
            <person name="Saito K."/>
            <person name="Kawai Y."/>
            <person name="Isono Y."/>
            <person name="Nakamura Y."/>
            <person name="Nagahari K."/>
            <person name="Murakami K."/>
            <person name="Yasuda T."/>
            <person name="Iwayanagi T."/>
            <person name="Wagatsuma M."/>
            <person name="Shiratori A."/>
            <person name="Sudo H."/>
            <person name="Hosoiri T."/>
            <person name="Kaku Y."/>
            <person name="Kodaira H."/>
            <person name="Kondo H."/>
            <person name="Sugawara M."/>
            <person name="Takahashi M."/>
            <person name="Kanda K."/>
            <person name="Yokoi T."/>
            <person name="Furuya T."/>
            <person name="Kikkawa E."/>
            <person name="Omura Y."/>
            <person name="Abe K."/>
            <person name="Kamihara K."/>
            <person name="Katsuta N."/>
            <person name="Sato K."/>
            <person name="Tanikawa M."/>
            <person name="Yamazaki M."/>
            <person name="Ninomiya K."/>
            <person name="Ishibashi T."/>
            <person name="Yamashita H."/>
            <person name="Murakawa K."/>
            <person name="Fujimori K."/>
            <person name="Tanai H."/>
            <person name="Kimata M."/>
            <person name="Watanabe M."/>
            <person name="Hiraoka S."/>
            <person name="Chiba Y."/>
            <person name="Ishida S."/>
            <person name="Ono Y."/>
            <person name="Takiguchi S."/>
            <person name="Watanabe S."/>
            <person name="Yosida M."/>
            <person name="Hotuta T."/>
            <person name="Kusano J."/>
            <person name="Kanehori K."/>
            <person name="Takahashi-Fujii A."/>
            <person name="Hara H."/>
            <person name="Tanase T.-O."/>
            <person name="Nomura Y."/>
            <person name="Togiya S."/>
            <person name="Komai F."/>
            <person name="Hara R."/>
            <person name="Takeuchi K."/>
            <person name="Arita M."/>
            <person name="Imose N."/>
            <person name="Musashino K."/>
            <person name="Yuuki H."/>
            <person name="Oshima A."/>
            <person name="Sasaki N."/>
            <person name="Aotsuka S."/>
            <person name="Yoshikawa Y."/>
            <person name="Matsunawa H."/>
            <person name="Ichihara T."/>
            <person name="Shiohata N."/>
            <person name="Sano S."/>
            <person name="Moriya S."/>
            <person name="Momiyama H."/>
            <person name="Satoh N."/>
            <person name="Takami S."/>
            <person name="Terashima Y."/>
            <person name="Suzuki O."/>
            <person name="Nakagawa S."/>
            <person name="Senoh A."/>
            <person name="Mizoguchi H."/>
            <person name="Goto Y."/>
            <person name="Shimizu F."/>
            <person name="Wakebe H."/>
            <person name="Hishigaki H."/>
            <person name="Watanabe T."/>
            <person name="Sugiyama A."/>
            <person name="Takemoto M."/>
            <person name="Kawakami B."/>
            <person name="Yamazaki M."/>
            <person name="Watanabe K."/>
            <person name="Kumagai A."/>
            <person name="Itakura S."/>
            <person name="Fukuzumi Y."/>
            <person name="Fujimori Y."/>
            <person name="Komiyama M."/>
            <person name="Tashiro H."/>
            <person name="Tanigami A."/>
            <person name="Fujiwara T."/>
            <person name="Ono T."/>
            <person name="Yamada K."/>
            <person name="Fujii Y."/>
            <person name="Ozaki K."/>
            <person name="Hirao M."/>
            <person name="Ohmori Y."/>
            <person name="Kawabata A."/>
            <person name="Hikiji T."/>
            <person name="Kobatake N."/>
            <person name="Inagaki H."/>
            <person name="Ikema Y."/>
            <person name="Okamoto S."/>
            <person name="Okitani R."/>
            <person name="Kawakami T."/>
            <person name="Noguchi S."/>
            <person name="Itoh T."/>
            <person name="Shigeta K."/>
            <person name="Senba T."/>
            <person name="Matsumura K."/>
            <person name="Nakajima Y."/>
            <person name="Mizuno T."/>
            <person name="Morinaga M."/>
            <person name="Sasaki M."/>
            <person name="Togashi T."/>
            <person name="Oyama M."/>
            <person name="Hata H."/>
            <person name="Watanabe M."/>
            <person name="Komatsu T."/>
            <person name="Mizushima-Sugano J."/>
            <person name="Satoh T."/>
            <person name="Shirai Y."/>
            <person name="Takahashi Y."/>
            <person name="Nakagawa K."/>
            <person name="Okumura K."/>
            <person name="Nagase T."/>
            <person name="Nomura N."/>
            <person name="Kikuchi H."/>
            <person name="Masuho Y."/>
            <person name="Yamashita R."/>
            <person name="Nakai K."/>
            <person name="Yada T."/>
            <person name="Nakamura Y."/>
            <person name="Ohara O."/>
            <person name="Isogai T."/>
            <person name="Sugano S."/>
        </authorList>
    </citation>
    <scope>NUCLEOTIDE SEQUENCE [LARGE SCALE MRNA]</scope>
    <scope>VARIANT ARG-17</scope>
</reference>
<reference key="3">
    <citation type="journal article" date="2006" name="Nature">
        <title>The DNA sequence and biological annotation of human chromosome 1.</title>
        <authorList>
            <person name="Gregory S.G."/>
            <person name="Barlow K.F."/>
            <person name="McLay K.E."/>
            <person name="Kaul R."/>
            <person name="Swarbreck D."/>
            <person name="Dunham A."/>
            <person name="Scott C.E."/>
            <person name="Howe K.L."/>
            <person name="Woodfine K."/>
            <person name="Spencer C.C.A."/>
            <person name="Jones M.C."/>
            <person name="Gillson C."/>
            <person name="Searle S."/>
            <person name="Zhou Y."/>
            <person name="Kokocinski F."/>
            <person name="McDonald L."/>
            <person name="Evans R."/>
            <person name="Phillips K."/>
            <person name="Atkinson A."/>
            <person name="Cooper R."/>
            <person name="Jones C."/>
            <person name="Hall R.E."/>
            <person name="Andrews T.D."/>
            <person name="Lloyd C."/>
            <person name="Ainscough R."/>
            <person name="Almeida J.P."/>
            <person name="Ambrose K.D."/>
            <person name="Anderson F."/>
            <person name="Andrew R.W."/>
            <person name="Ashwell R.I.S."/>
            <person name="Aubin K."/>
            <person name="Babbage A.K."/>
            <person name="Bagguley C.L."/>
            <person name="Bailey J."/>
            <person name="Beasley H."/>
            <person name="Bethel G."/>
            <person name="Bird C.P."/>
            <person name="Bray-Allen S."/>
            <person name="Brown J.Y."/>
            <person name="Brown A.J."/>
            <person name="Buckley D."/>
            <person name="Burton J."/>
            <person name="Bye J."/>
            <person name="Carder C."/>
            <person name="Chapman J.C."/>
            <person name="Clark S.Y."/>
            <person name="Clarke G."/>
            <person name="Clee C."/>
            <person name="Cobley V."/>
            <person name="Collier R.E."/>
            <person name="Corby N."/>
            <person name="Coville G.J."/>
            <person name="Davies J."/>
            <person name="Deadman R."/>
            <person name="Dunn M."/>
            <person name="Earthrowl M."/>
            <person name="Ellington A.G."/>
            <person name="Errington H."/>
            <person name="Frankish A."/>
            <person name="Frankland J."/>
            <person name="French L."/>
            <person name="Garner P."/>
            <person name="Garnett J."/>
            <person name="Gay L."/>
            <person name="Ghori M.R.J."/>
            <person name="Gibson R."/>
            <person name="Gilby L.M."/>
            <person name="Gillett W."/>
            <person name="Glithero R.J."/>
            <person name="Grafham D.V."/>
            <person name="Griffiths C."/>
            <person name="Griffiths-Jones S."/>
            <person name="Grocock R."/>
            <person name="Hammond S."/>
            <person name="Harrison E.S.I."/>
            <person name="Hart E."/>
            <person name="Haugen E."/>
            <person name="Heath P.D."/>
            <person name="Holmes S."/>
            <person name="Holt K."/>
            <person name="Howden P.J."/>
            <person name="Hunt A.R."/>
            <person name="Hunt S.E."/>
            <person name="Hunter G."/>
            <person name="Isherwood J."/>
            <person name="James R."/>
            <person name="Johnson C."/>
            <person name="Johnson D."/>
            <person name="Joy A."/>
            <person name="Kay M."/>
            <person name="Kershaw J.K."/>
            <person name="Kibukawa M."/>
            <person name="Kimberley A.M."/>
            <person name="King A."/>
            <person name="Knights A.J."/>
            <person name="Lad H."/>
            <person name="Laird G."/>
            <person name="Lawlor S."/>
            <person name="Leongamornlert D.A."/>
            <person name="Lloyd D.M."/>
            <person name="Loveland J."/>
            <person name="Lovell J."/>
            <person name="Lush M.J."/>
            <person name="Lyne R."/>
            <person name="Martin S."/>
            <person name="Mashreghi-Mohammadi M."/>
            <person name="Matthews L."/>
            <person name="Matthews N.S.W."/>
            <person name="McLaren S."/>
            <person name="Milne S."/>
            <person name="Mistry S."/>
            <person name="Moore M.J.F."/>
            <person name="Nickerson T."/>
            <person name="O'Dell C.N."/>
            <person name="Oliver K."/>
            <person name="Palmeiri A."/>
            <person name="Palmer S.A."/>
            <person name="Parker A."/>
            <person name="Patel D."/>
            <person name="Pearce A.V."/>
            <person name="Peck A.I."/>
            <person name="Pelan S."/>
            <person name="Phelps K."/>
            <person name="Phillimore B.J."/>
            <person name="Plumb R."/>
            <person name="Rajan J."/>
            <person name="Raymond C."/>
            <person name="Rouse G."/>
            <person name="Saenphimmachak C."/>
            <person name="Sehra H.K."/>
            <person name="Sheridan E."/>
            <person name="Shownkeen R."/>
            <person name="Sims S."/>
            <person name="Skuce C.D."/>
            <person name="Smith M."/>
            <person name="Steward C."/>
            <person name="Subramanian S."/>
            <person name="Sycamore N."/>
            <person name="Tracey A."/>
            <person name="Tromans A."/>
            <person name="Van Helmond Z."/>
            <person name="Wall M."/>
            <person name="Wallis J.M."/>
            <person name="White S."/>
            <person name="Whitehead S.L."/>
            <person name="Wilkinson J.E."/>
            <person name="Willey D.L."/>
            <person name="Williams H."/>
            <person name="Wilming L."/>
            <person name="Wray P.W."/>
            <person name="Wu Z."/>
            <person name="Coulson A."/>
            <person name="Vaudin M."/>
            <person name="Sulston J.E."/>
            <person name="Durbin R.M."/>
            <person name="Hubbard T."/>
            <person name="Wooster R."/>
            <person name="Dunham I."/>
            <person name="Carter N.P."/>
            <person name="McVean G."/>
            <person name="Ross M.T."/>
            <person name="Harrow J."/>
            <person name="Olson M.V."/>
            <person name="Beck S."/>
            <person name="Rogers J."/>
            <person name="Bentley D.R."/>
        </authorList>
    </citation>
    <scope>NUCLEOTIDE SEQUENCE [LARGE SCALE GENOMIC DNA]</scope>
</reference>
<reference key="4">
    <citation type="submission" date="2005-09" db="EMBL/GenBank/DDBJ databases">
        <authorList>
            <person name="Mural R.J."/>
            <person name="Istrail S."/>
            <person name="Sutton G.G."/>
            <person name="Florea L."/>
            <person name="Halpern A.L."/>
            <person name="Mobarry C.M."/>
            <person name="Lippert R."/>
            <person name="Walenz B."/>
            <person name="Shatkay H."/>
            <person name="Dew I."/>
            <person name="Miller J.R."/>
            <person name="Flanigan M.J."/>
            <person name="Edwards N.J."/>
            <person name="Bolanos R."/>
            <person name="Fasulo D."/>
            <person name="Halldorsson B.V."/>
            <person name="Hannenhalli S."/>
            <person name="Turner R."/>
            <person name="Yooseph S."/>
            <person name="Lu F."/>
            <person name="Nusskern D.R."/>
            <person name="Shue B.C."/>
            <person name="Zheng X.H."/>
            <person name="Zhong F."/>
            <person name="Delcher A.L."/>
            <person name="Huson D.H."/>
            <person name="Kravitz S.A."/>
            <person name="Mouchard L."/>
            <person name="Reinert K."/>
            <person name="Remington K.A."/>
            <person name="Clark A.G."/>
            <person name="Waterman M.S."/>
            <person name="Eichler E.E."/>
            <person name="Adams M.D."/>
            <person name="Hunkapiller M.W."/>
            <person name="Myers E.W."/>
            <person name="Venter J.C."/>
        </authorList>
    </citation>
    <scope>NUCLEOTIDE SEQUENCE [LARGE SCALE GENOMIC DNA]</scope>
    <scope>VARIANT ARG-17</scope>
</reference>
<reference key="5">
    <citation type="journal article" date="2004" name="Genome Res.">
        <title>The status, quality, and expansion of the NIH full-length cDNA project: the Mammalian Gene Collection (MGC).</title>
        <authorList>
            <consortium name="The MGC Project Team"/>
        </authorList>
    </citation>
    <scope>NUCLEOTIDE SEQUENCE [LARGE SCALE MRNA]</scope>
    <scope>VARIANT ARG-17</scope>
</reference>
<reference key="6">
    <citation type="journal article" date="2004" name="J. Natl. Cancer Inst.">
        <title>Hypermethylation and transcriptional downregulation of the carboxyl-terminal modulator protein gene in glioblastomas.</title>
        <authorList>
            <person name="Knobbe C.B."/>
            <person name="Reifenberger J."/>
            <person name="Blaschke B."/>
            <person name="Reifenberger G."/>
        </authorList>
    </citation>
    <scope>TISSUE SPECIFICITY</scope>
</reference>
<reference key="7">
    <citation type="journal article" date="2007" name="Am. J. Physiol.">
        <title>Carboxy-terminal modulator protein induces Akt phosphorylation and activation, thereby enhancing antiapoptotic, glycogen synthetic, and glucose uptake pathways.</title>
        <authorList>
            <person name="Ono H."/>
            <person name="Sakoda H."/>
            <person name="Fujishiro M."/>
            <person name="Anai M."/>
            <person name="Kushiyama A."/>
            <person name="Fukushima Y."/>
            <person name="Katagiri H."/>
            <person name="Ogihara T."/>
            <person name="Oka Y."/>
            <person name="Kamata H."/>
            <person name="Horike N."/>
            <person name="Uchijima Y."/>
            <person name="Kurihara H."/>
            <person name="Asano T."/>
        </authorList>
    </citation>
    <scope>FUNCTION</scope>
</reference>
<reference key="8">
    <citation type="journal article" date="2009" name="BMC Cell Biol.">
        <title>Heat shock protein 70-mediated sensitization of cells to apoptosis by carboxyl-terminal modulator protein.</title>
        <authorList>
            <person name="Piao L."/>
            <person name="Li Y."/>
            <person name="Yang K.J."/>
            <person name="Park K.A."/>
            <person name="Byun H.S."/>
            <person name="Won M."/>
            <person name="Hong J."/>
            <person name="Kim J.L."/>
            <person name="Kweon G.R."/>
            <person name="Hur G.M."/>
            <person name="Seok J.H."/>
            <person name="Cho J.Y."/>
            <person name="Chun T."/>
            <person name="Hess D."/>
            <person name="Sack R."/>
            <person name="Maira S.M."/>
            <person name="Brazil D.P."/>
            <person name="Hemmings B.A."/>
            <person name="Park J."/>
        </authorList>
    </citation>
    <scope>PHOSPHORYLATION AT SER-37 AND SER-38</scope>
    <scope>IDENTIFICATION BY MASS SPECTROMETRY</scope>
    <scope>MUTAGENESIS OF 37-SER-SER-38</scope>
    <scope>SUBCELLULAR LOCATION</scope>
</reference>
<reference key="9">
    <citation type="journal article" date="2009" name="Biochemistry">
        <title>The Akt C-terminal modulator protein is an acyl-CoA thioesterase of the Hotdog-Fold family.</title>
        <authorList>
            <person name="Zhao H."/>
            <person name="Martin B.M."/>
            <person name="Bisoffi M."/>
            <person name="Dunaway-Mariano D."/>
        </authorList>
    </citation>
    <scope>CATALYTIC ACTIVITY</scope>
    <scope>FUNCTION</scope>
    <scope>BIOPHYSICOCHEMICAL PROPERTIES</scope>
</reference>
<reference key="10">
    <citation type="journal article" date="2009" name="Cell. Signal.">
        <title>Carboxy-terminal modulator protein (CTMP) is a mitochondrial protein that sensitizes cells to apoptosis.</title>
        <authorList>
            <person name="Parcellier A."/>
            <person name="Tintignac L.A."/>
            <person name="Zhuravleva E."/>
            <person name="Cron P."/>
            <person name="Schenk S."/>
            <person name="Bozulic L."/>
            <person name="Hemmings B.A."/>
        </authorList>
    </citation>
    <scope>SUBCELLULAR LOCATION</scope>
    <scope>FUNCTION</scope>
    <scope>MUTAGENESIS OF SER-37</scope>
</reference>
<reference key="11">
    <citation type="journal article" date="2009" name="PLoS ONE">
        <title>The carboxy-terminal modulator protein (CTMP) regulates mitochondrial dynamics.</title>
        <authorList>
            <person name="Parcellier A."/>
            <person name="Tintignac L.A."/>
            <person name="Zhuravleva E."/>
            <person name="Dummler B."/>
            <person name="Brazil D.P."/>
            <person name="Hynx D."/>
            <person name="Cron P."/>
            <person name="Schenk S."/>
            <person name="Olivieri V."/>
            <person name="Hemmings B.A."/>
        </authorList>
    </citation>
    <scope>FUNCTION</scope>
    <scope>SUBCELLULAR LOCATION</scope>
</reference>
<reference key="12">
    <citation type="journal article" date="2012" name="Biochemistry">
        <title>Correlation of structure and function in the human hotdog-fold enzyme hTHEM4.</title>
        <authorList>
            <person name="Zhao H."/>
            <person name="Lim K."/>
            <person name="Choudry A."/>
            <person name="Latham J.A."/>
            <person name="Pathak M.C."/>
            <person name="Dominguez D."/>
            <person name="Luo L."/>
            <person name="Herzberg O."/>
            <person name="Dunaway-Mariano D."/>
        </authorList>
    </citation>
    <scope>X-RAY CRYSTALLOGRAPHY (2.3 ANGSTROMS) OF 40-240 IN COMPLEX WITH UNDECAN-2-ONE-COA</scope>
    <scope>CATALYTIC ACTIVITY</scope>
    <scope>BIOPHYSICOCHEMICAL PROPERTIES</scope>
    <scope>SUBUNIT</scope>
    <scope>FUNCTION</scope>
    <scope>ACTIVE SITE</scope>
    <scope>INTERACTION WITH AKT1</scope>
    <scope>MUTAGENESIS OF HIS-152; ASP-161; THR-177; ASN-183; ARG-206 AND LYS-207</scope>
</reference>
<reference key="13">
    <citation type="journal article" date="2012" name="Mol. Cell. Biol.">
        <title>Acyl coenzyme A thioesterase Them5/Acot15 is involved in cardiolipin remodeling and fatty liver development.</title>
        <authorList>
            <person name="Zhuravleva E."/>
            <person name="Gut H."/>
            <person name="Hynx D."/>
            <person name="Marcellin D."/>
            <person name="Bleck C.K."/>
            <person name="Genoud C."/>
            <person name="Cron P."/>
            <person name="Keusch J.J."/>
            <person name="Dummler B."/>
            <person name="Esposti M.D."/>
            <person name="Hemmings B.A."/>
        </authorList>
    </citation>
    <scope>X-RAY CRYSTALLOGRAPHY (1.59 ANGSTROMS) OF 37-240</scope>
    <scope>SUBUNIT</scope>
</reference>
<reference key="14">
    <citation type="journal article" date="2006" name="Acta Neuropathol.">
        <title>Activation of Akt independent of PTEN and CTMP tumor-suppressor gene mutations in epilepsy-associated Taylor-type focal cortical dysplasias.</title>
        <authorList>
            <person name="Schick V."/>
            <person name="Majores M."/>
            <person name="Engels G."/>
            <person name="Spitoni S."/>
            <person name="Koch A."/>
            <person name="Elger C.E."/>
            <person name="Simon M."/>
            <person name="Knobbe C."/>
            <person name="Bluemcke I."/>
            <person name="Becker A.J."/>
        </authorList>
    </citation>
    <scope>VARIANTS ARG-17 AND CYS-38</scope>
</reference>
<organism>
    <name type="scientific">Homo sapiens</name>
    <name type="common">Human</name>
    <dbReference type="NCBI Taxonomy" id="9606"/>
    <lineage>
        <taxon>Eukaryota</taxon>
        <taxon>Metazoa</taxon>
        <taxon>Chordata</taxon>
        <taxon>Craniata</taxon>
        <taxon>Vertebrata</taxon>
        <taxon>Euteleostomi</taxon>
        <taxon>Mammalia</taxon>
        <taxon>Eutheria</taxon>
        <taxon>Euarchontoglires</taxon>
        <taxon>Primates</taxon>
        <taxon>Haplorrhini</taxon>
        <taxon>Catarrhini</taxon>
        <taxon>Hominidae</taxon>
        <taxon>Homo</taxon>
    </lineage>
</organism>
<evidence type="ECO:0000250" key="1">
    <source>
        <dbReference type="UniProtKB" id="Q3UUI3"/>
    </source>
</evidence>
<evidence type="ECO:0000255" key="2"/>
<evidence type="ECO:0000269" key="3">
    <source>
    </source>
</evidence>
<evidence type="ECO:0000269" key="4">
    <source>
    </source>
</evidence>
<evidence type="ECO:0000269" key="5">
    <source>
    </source>
</evidence>
<evidence type="ECO:0000269" key="6">
    <source>
    </source>
</evidence>
<evidence type="ECO:0000269" key="7">
    <source>
    </source>
</evidence>
<evidence type="ECO:0000269" key="8">
    <source>
    </source>
</evidence>
<evidence type="ECO:0000269" key="9">
    <source>
    </source>
</evidence>
<evidence type="ECO:0000269" key="10">
    <source>
    </source>
</evidence>
<evidence type="ECO:0000269" key="11">
    <source>
    </source>
</evidence>
<evidence type="ECO:0000269" key="12">
    <source>
    </source>
</evidence>
<evidence type="ECO:0000269" key="13">
    <source>
    </source>
</evidence>
<evidence type="ECO:0000269" key="14">
    <source>
    </source>
</evidence>
<evidence type="ECO:0000269" key="15">
    <source ref="4"/>
</evidence>
<evidence type="ECO:0000305" key="16"/>
<evidence type="ECO:0000305" key="17">
    <source>
    </source>
</evidence>
<evidence type="ECO:0000305" key="18">
    <source>
    </source>
</evidence>
<evidence type="ECO:0007829" key="19">
    <source>
        <dbReference type="PDB" id="4AE8"/>
    </source>
</evidence>
<evidence type="ECO:0007829" key="20">
    <source>
        <dbReference type="PDB" id="4GAH"/>
    </source>
</evidence>
<protein>
    <recommendedName>
        <fullName>Acyl-coenzyme A thioesterase THEM4</fullName>
        <shortName>Acyl-CoA thioesterase THEM4</shortName>
        <ecNumber evidence="11 14">3.1.2.2</ecNumber>
    </recommendedName>
    <alternativeName>
        <fullName>Carboxyl-terminal modulator protein</fullName>
    </alternativeName>
    <alternativeName>
        <fullName>Thioesterase superfamily member 4</fullName>
    </alternativeName>
</protein>
<sequence length="240" mass="27130">MLRSCAARLRTLGALCLPPVGRRLPGSEPRPELRSFSSEEVILKDCSVPNPSWNKDLRLLFDQFMKKCEDGSWKRLPSYKRTPTEWIQDFKTHFLDPKLMKEEQMSQAQLFTRSFDDGLGFEYVMFYNDIEKRMVCLFQGGPYLEGPPGFIHGGAIATMIDATVGMCAMMAGGIVMTANLNINYKRPIPLCSVVMINSQLDKVEGRKFFVSCNVQSVDEKTLYSEATSLFIKLNPAKSLT</sequence>
<dbReference type="EC" id="3.1.2.2" evidence="11 14"/>
<dbReference type="EMBL" id="AJ313515">
    <property type="protein sequence ID" value="CAC86384.1"/>
    <property type="molecule type" value="mRNA"/>
</dbReference>
<dbReference type="EMBL" id="AK314852">
    <property type="protein sequence ID" value="BAG37369.1"/>
    <property type="molecule type" value="mRNA"/>
</dbReference>
<dbReference type="EMBL" id="AL450992">
    <property type="status" value="NOT_ANNOTATED_CDS"/>
    <property type="molecule type" value="Genomic_DNA"/>
</dbReference>
<dbReference type="EMBL" id="CH471121">
    <property type="protein sequence ID" value="EAW53400.1"/>
    <property type="molecule type" value="Genomic_DNA"/>
</dbReference>
<dbReference type="EMBL" id="BC065277">
    <property type="protein sequence ID" value="AAH65277.1"/>
    <property type="molecule type" value="mRNA"/>
</dbReference>
<dbReference type="CCDS" id="CCDS1006.1"/>
<dbReference type="RefSeq" id="NP_444283.2">
    <property type="nucleotide sequence ID" value="NM_053055.5"/>
</dbReference>
<dbReference type="PDB" id="4AE8">
    <property type="method" value="X-ray"/>
    <property type="resolution" value="1.59 A"/>
    <property type="chains" value="A/B/C/D=37-240"/>
</dbReference>
<dbReference type="PDB" id="4GAH">
    <property type="method" value="X-ray"/>
    <property type="resolution" value="2.30 A"/>
    <property type="chains" value="A/B=40-240"/>
</dbReference>
<dbReference type="PDBsum" id="4AE8"/>
<dbReference type="PDBsum" id="4GAH"/>
<dbReference type="SMR" id="Q5T1C6"/>
<dbReference type="BioGRID" id="125557">
    <property type="interactions" value="89"/>
</dbReference>
<dbReference type="DIP" id="DIP-60764N"/>
<dbReference type="FunCoup" id="Q5T1C6">
    <property type="interactions" value="833"/>
</dbReference>
<dbReference type="IntAct" id="Q5T1C6">
    <property type="interactions" value="34"/>
</dbReference>
<dbReference type="MINT" id="Q5T1C6"/>
<dbReference type="STRING" id="9606.ENSP00000357804"/>
<dbReference type="SwissLipids" id="SLP:000000657"/>
<dbReference type="iPTMnet" id="Q5T1C6"/>
<dbReference type="PhosphoSitePlus" id="Q5T1C6"/>
<dbReference type="SwissPalm" id="Q5T1C6"/>
<dbReference type="BioMuta" id="THEM4"/>
<dbReference type="DMDM" id="74744451"/>
<dbReference type="jPOST" id="Q5T1C6"/>
<dbReference type="MassIVE" id="Q5T1C6"/>
<dbReference type="PaxDb" id="9606-ENSP00000357804"/>
<dbReference type="PeptideAtlas" id="Q5T1C6"/>
<dbReference type="ProteomicsDB" id="64259"/>
<dbReference type="Pumba" id="Q5T1C6"/>
<dbReference type="Antibodypedia" id="34077">
    <property type="antibodies" value="87 antibodies from 29 providers"/>
</dbReference>
<dbReference type="DNASU" id="117145"/>
<dbReference type="Ensembl" id="ENST00000368814.8">
    <property type="protein sequence ID" value="ENSP00000357804.3"/>
    <property type="gene ID" value="ENSG00000159445.13"/>
</dbReference>
<dbReference type="GeneID" id="117145"/>
<dbReference type="KEGG" id="hsa:117145"/>
<dbReference type="MANE-Select" id="ENST00000368814.8">
    <property type="protein sequence ID" value="ENSP00000357804.3"/>
    <property type="RefSeq nucleotide sequence ID" value="NM_053055.5"/>
    <property type="RefSeq protein sequence ID" value="NP_444283.2"/>
</dbReference>
<dbReference type="UCSC" id="uc001ezj.3">
    <property type="organism name" value="human"/>
</dbReference>
<dbReference type="AGR" id="HGNC:17947"/>
<dbReference type="CTD" id="117145"/>
<dbReference type="DisGeNET" id="117145"/>
<dbReference type="GeneCards" id="THEM4"/>
<dbReference type="HGNC" id="HGNC:17947">
    <property type="gene designation" value="THEM4"/>
</dbReference>
<dbReference type="HPA" id="ENSG00000159445">
    <property type="expression patterns" value="Low tissue specificity"/>
</dbReference>
<dbReference type="MIM" id="606388">
    <property type="type" value="gene"/>
</dbReference>
<dbReference type="neXtProt" id="NX_Q5T1C6"/>
<dbReference type="OpenTargets" id="ENSG00000159445"/>
<dbReference type="PharmGKB" id="PA142670813"/>
<dbReference type="VEuPathDB" id="HostDB:ENSG00000159445"/>
<dbReference type="eggNOG" id="KOG4781">
    <property type="taxonomic scope" value="Eukaryota"/>
</dbReference>
<dbReference type="GeneTree" id="ENSGT00940000160047"/>
<dbReference type="HOGENOM" id="CLU_072603_0_1_1"/>
<dbReference type="InParanoid" id="Q5T1C6"/>
<dbReference type="OMA" id="MFYNDVE"/>
<dbReference type="OrthoDB" id="506431at2759"/>
<dbReference type="PAN-GO" id="Q5T1C6">
    <property type="GO annotations" value="0 GO annotations based on evolutionary models"/>
</dbReference>
<dbReference type="PhylomeDB" id="Q5T1C6"/>
<dbReference type="TreeFam" id="TF332518"/>
<dbReference type="BRENDA" id="3.1.2.20">
    <property type="organism ID" value="2681"/>
</dbReference>
<dbReference type="PathwayCommons" id="Q5T1C6"/>
<dbReference type="Reactome" id="R-HSA-1257604">
    <property type="pathway name" value="PIP3 activates AKT signaling"/>
</dbReference>
<dbReference type="Reactome" id="R-HSA-165158">
    <property type="pathway name" value="Activation of AKT2"/>
</dbReference>
<dbReference type="Reactome" id="R-HSA-199418">
    <property type="pathway name" value="Negative regulation of the PI3K/AKT network"/>
</dbReference>
<dbReference type="Reactome" id="R-HSA-389357">
    <property type="pathway name" value="CD28 dependent PI3K/Akt signaling"/>
</dbReference>
<dbReference type="Reactome" id="R-HSA-5218920">
    <property type="pathway name" value="VEGFR2 mediated vascular permeability"/>
</dbReference>
<dbReference type="Reactome" id="R-HSA-77289">
    <property type="pathway name" value="Mitochondrial Fatty Acid Beta-Oxidation"/>
</dbReference>
<dbReference type="SABIO-RK" id="Q5T1C6"/>
<dbReference type="SignaLink" id="Q5T1C6"/>
<dbReference type="SIGNOR" id="Q5T1C6"/>
<dbReference type="BioGRID-ORCS" id="117145">
    <property type="hits" value="16 hits in 1157 CRISPR screens"/>
</dbReference>
<dbReference type="ChiTaRS" id="THEM4">
    <property type="organism name" value="human"/>
</dbReference>
<dbReference type="EvolutionaryTrace" id="Q5T1C6"/>
<dbReference type="GenomeRNAi" id="117145"/>
<dbReference type="Pharos" id="Q5T1C6">
    <property type="development level" value="Tbio"/>
</dbReference>
<dbReference type="PRO" id="PR:Q5T1C6"/>
<dbReference type="Proteomes" id="UP000005640">
    <property type="component" value="Chromosome 1"/>
</dbReference>
<dbReference type="RNAct" id="Q5T1C6">
    <property type="molecule type" value="protein"/>
</dbReference>
<dbReference type="Bgee" id="ENSG00000159445">
    <property type="expression patterns" value="Expressed in kidney epithelium and 184 other cell types or tissues"/>
</dbReference>
<dbReference type="ExpressionAtlas" id="Q5T1C6">
    <property type="expression patterns" value="baseline and differential"/>
</dbReference>
<dbReference type="GO" id="GO:0005829">
    <property type="term" value="C:cytosol"/>
    <property type="evidence" value="ECO:0000314"/>
    <property type="project" value="UniProtKB"/>
</dbReference>
<dbReference type="GO" id="GO:0005743">
    <property type="term" value="C:mitochondrial inner membrane"/>
    <property type="evidence" value="ECO:0007669"/>
    <property type="project" value="UniProtKB-SubCell"/>
</dbReference>
<dbReference type="GO" id="GO:0005758">
    <property type="term" value="C:mitochondrial intermembrane space"/>
    <property type="evidence" value="ECO:0007669"/>
    <property type="project" value="UniProtKB-SubCell"/>
</dbReference>
<dbReference type="GO" id="GO:0005759">
    <property type="term" value="C:mitochondrial matrix"/>
    <property type="evidence" value="ECO:0000304"/>
    <property type="project" value="Reactome"/>
</dbReference>
<dbReference type="GO" id="GO:0005739">
    <property type="term" value="C:mitochondrion"/>
    <property type="evidence" value="ECO:0000314"/>
    <property type="project" value="UniProtKB"/>
</dbReference>
<dbReference type="GO" id="GO:0005886">
    <property type="term" value="C:plasma membrane"/>
    <property type="evidence" value="ECO:0000304"/>
    <property type="project" value="Reactome"/>
</dbReference>
<dbReference type="GO" id="GO:0032587">
    <property type="term" value="C:ruffle membrane"/>
    <property type="evidence" value="ECO:0007669"/>
    <property type="project" value="UniProtKB-SubCell"/>
</dbReference>
<dbReference type="GO" id="GO:0052816">
    <property type="term" value="F:long-chain fatty acyl-CoA hydrolase activity"/>
    <property type="evidence" value="ECO:0000314"/>
    <property type="project" value="UniProtKB"/>
</dbReference>
<dbReference type="GO" id="GO:0006631">
    <property type="term" value="P:fatty acid metabolic process"/>
    <property type="evidence" value="ECO:0000314"/>
    <property type="project" value="UniProtKB"/>
</dbReference>
<dbReference type="GO" id="GO:0051898">
    <property type="term" value="P:negative regulation of phosphatidylinositol 3-kinase/protein kinase B signal transduction"/>
    <property type="evidence" value="ECO:0000315"/>
    <property type="project" value="UniProtKB"/>
</dbReference>
<dbReference type="GO" id="GO:1902108">
    <property type="term" value="P:regulation of mitochondrial membrane permeability involved in apoptotic process"/>
    <property type="evidence" value="ECO:0000315"/>
    <property type="project" value="UniProtKB"/>
</dbReference>
<dbReference type="CDD" id="cd03443">
    <property type="entry name" value="PaaI_thioesterase"/>
    <property type="match status" value="1"/>
</dbReference>
<dbReference type="FunFam" id="3.10.129.10:FF:000046">
    <property type="entry name" value="Acyl-coenzyme A thioesterase THEM4"/>
    <property type="match status" value="1"/>
</dbReference>
<dbReference type="Gene3D" id="3.10.129.10">
    <property type="entry name" value="Hotdog Thioesterase"/>
    <property type="match status" value="1"/>
</dbReference>
<dbReference type="InterPro" id="IPR029069">
    <property type="entry name" value="HotDog_dom_sf"/>
</dbReference>
<dbReference type="InterPro" id="IPR052365">
    <property type="entry name" value="THEM4/THEM5_acyl-CoA_thioest"/>
</dbReference>
<dbReference type="InterPro" id="IPR006683">
    <property type="entry name" value="Thioestr_dom"/>
</dbReference>
<dbReference type="PANTHER" id="PTHR12418">
    <property type="entry name" value="ACYL-COENZYME A THIOESTERASE THEM4"/>
    <property type="match status" value="1"/>
</dbReference>
<dbReference type="PANTHER" id="PTHR12418:SF19">
    <property type="entry name" value="ACYL-COENZYME A THIOESTERASE THEM4"/>
    <property type="match status" value="1"/>
</dbReference>
<dbReference type="Pfam" id="PF03061">
    <property type="entry name" value="4HBT"/>
    <property type="match status" value="1"/>
</dbReference>
<dbReference type="SUPFAM" id="SSF54637">
    <property type="entry name" value="Thioesterase/thiol ester dehydrase-isomerase"/>
    <property type="match status" value="1"/>
</dbReference>
<gene>
    <name type="primary">THEM4</name>
    <name type="synonym">CTMP</name>
</gene>
<name>THEM4_HUMAN</name>
<feature type="transit peptide" description="Mitochondrion" evidence="2">
    <location>
        <begin position="1"/>
        <end position="36"/>
    </location>
</feature>
<feature type="chain" id="PRO_0000314179" description="Acyl-coenzyme A thioesterase THEM4">
    <location>
        <begin position="37"/>
        <end position="240"/>
    </location>
</feature>
<feature type="active site" description="Proton donor/acceptor" evidence="18">
    <location>
        <position position="161"/>
    </location>
</feature>
<feature type="binding site">
    <location>
        <position position="183"/>
    </location>
    <ligand>
        <name>substrate</name>
    </ligand>
</feature>
<feature type="binding site">
    <location>
        <position position="185"/>
    </location>
    <ligand>
        <name>substrate</name>
    </ligand>
</feature>
<feature type="binding site">
    <location>
        <begin position="206"/>
        <end position="207"/>
    </location>
    <ligand>
        <name>substrate</name>
    </ligand>
</feature>
<feature type="modified residue" description="Phosphoserine" evidence="12">
    <location>
        <position position="37"/>
    </location>
</feature>
<feature type="modified residue" description="Phosphoserine" evidence="12">
    <location>
        <position position="38"/>
    </location>
</feature>
<feature type="modified residue" description="N6-succinyllysine" evidence="1">
    <location>
        <position position="55"/>
    </location>
</feature>
<feature type="modified residue" description="N6-succinyllysine" evidence="1">
    <location>
        <position position="66"/>
    </location>
</feature>
<feature type="modified residue" description="N6-acetyllysine" evidence="1">
    <location>
        <position position="74"/>
    </location>
</feature>
<feature type="modified residue" description="N6-succinyllysine" evidence="1">
    <location>
        <position position="98"/>
    </location>
</feature>
<feature type="modified residue" description="N6-succinyllysine" evidence="1">
    <location>
        <position position="207"/>
    </location>
</feature>
<feature type="sequence variant" id="VAR_037865" description="In dbSNP:rs3748805." evidence="3 4 6 7 15">
    <original>L</original>
    <variation>R</variation>
    <location>
        <position position="17"/>
    </location>
</feature>
<feature type="sequence variant" id="VAR_037866" description="In dbSNP:rs144257719." evidence="7">
    <original>S</original>
    <variation>C</variation>
    <location>
        <position position="38"/>
    </location>
</feature>
<feature type="mutagenesis site" description="Abolishes import into the mitochondria." evidence="12">
    <original>SS</original>
    <variation>DD</variation>
    <location>
        <begin position="37"/>
        <end position="38"/>
    </location>
</feature>
<feature type="mutagenesis site" description="Abolishes cleavage of mitochondrial transit peptide." evidence="9">
    <original>S</original>
    <variation>A</variation>
    <location>
        <position position="37"/>
    </location>
</feature>
<feature type="mutagenesis site" description="Strongly reduced enzyme activity." evidence="14">
    <original>H</original>
    <variation>A</variation>
    <variation>F</variation>
    <location>
        <position position="152"/>
    </location>
</feature>
<feature type="mutagenesis site" description="Nearly abolishes enzyme activity. Strongly reduced affinity for myristoyl-CoA." evidence="14">
    <original>D</original>
    <variation>E</variation>
    <variation>N</variation>
    <location>
        <position position="161"/>
    </location>
</feature>
<feature type="mutagenesis site" description="Strongly reduced enzyme activity." evidence="14">
    <original>T</original>
    <variation>A</variation>
    <location>
        <position position="177"/>
    </location>
</feature>
<feature type="mutagenesis site" description="No effect on enzyme activity." evidence="14">
    <original>N</original>
    <variation>A</variation>
    <location>
        <position position="183"/>
    </location>
</feature>
<feature type="mutagenesis site" description="Reduces enzyme activity." evidence="14">
    <original>R</original>
    <variation>A</variation>
    <location>
        <position position="206"/>
    </location>
</feature>
<feature type="mutagenesis site" description="Slightly reduced enzyme activity." evidence="14">
    <original>K</original>
    <variation>A</variation>
    <location>
        <position position="207"/>
    </location>
</feature>
<feature type="helix" evidence="19">
    <location>
        <begin position="55"/>
        <end position="67"/>
    </location>
</feature>
<feature type="turn" evidence="19">
    <location>
        <begin position="68"/>
        <end position="70"/>
    </location>
</feature>
<feature type="strand" evidence="19">
    <location>
        <begin position="71"/>
        <end position="76"/>
    </location>
</feature>
<feature type="helix" evidence="20">
    <location>
        <begin position="84"/>
        <end position="93"/>
    </location>
</feature>
<feature type="helix" evidence="19">
    <location>
        <begin position="111"/>
        <end position="113"/>
    </location>
</feature>
<feature type="turn" evidence="19">
    <location>
        <begin position="117"/>
        <end position="119"/>
    </location>
</feature>
<feature type="strand" evidence="19">
    <location>
        <begin position="120"/>
        <end position="128"/>
    </location>
</feature>
<feature type="turn" evidence="19">
    <location>
        <begin position="129"/>
        <end position="132"/>
    </location>
</feature>
<feature type="strand" evidence="19">
    <location>
        <begin position="133"/>
        <end position="140"/>
    </location>
</feature>
<feature type="helix" evidence="19">
    <location>
        <begin position="142"/>
        <end position="144"/>
    </location>
</feature>
<feature type="strand" evidence="19">
    <location>
        <begin position="145"/>
        <end position="147"/>
    </location>
</feature>
<feature type="helix" evidence="19">
    <location>
        <begin position="153"/>
        <end position="172"/>
    </location>
</feature>
<feature type="strand" evidence="19">
    <location>
        <begin position="175"/>
        <end position="184"/>
    </location>
</feature>
<feature type="strand" evidence="19">
    <location>
        <begin position="193"/>
        <end position="204"/>
    </location>
</feature>
<feature type="strand" evidence="19">
    <location>
        <begin position="207"/>
        <end position="216"/>
    </location>
</feature>
<feature type="strand" evidence="19">
    <location>
        <begin position="222"/>
        <end position="232"/>
    </location>
</feature>
<feature type="turn" evidence="20">
    <location>
        <begin position="235"/>
        <end position="237"/>
    </location>
</feature>